<dbReference type="EMBL" id="AL161746">
    <property type="protein sequence ID" value="CAB81914.1"/>
    <property type="molecule type" value="Genomic_DNA"/>
</dbReference>
<dbReference type="EMBL" id="CP002688">
    <property type="status" value="NOT_ANNOTATED_CDS"/>
    <property type="molecule type" value="Genomic_DNA"/>
</dbReference>
<dbReference type="PIR" id="T48153">
    <property type="entry name" value="T48153"/>
</dbReference>
<dbReference type="SMR" id="Q9M041"/>
<dbReference type="STRING" id="3702.Q9M041"/>
<dbReference type="PaxDb" id="3702-AT5G01310.1"/>
<dbReference type="Araport" id="AT5G01310"/>
<dbReference type="TAIR" id="AT5G01310">
    <property type="gene designation" value="APTX"/>
</dbReference>
<dbReference type="eggNOG" id="KOG0562">
    <property type="taxonomic scope" value="Eukaryota"/>
</dbReference>
<dbReference type="eggNOG" id="KOG2134">
    <property type="taxonomic scope" value="Eukaryota"/>
</dbReference>
<dbReference type="HOGENOM" id="CLU_015173_0_0_1"/>
<dbReference type="InParanoid" id="Q9M041"/>
<dbReference type="PhylomeDB" id="Q9M041"/>
<dbReference type="BioCyc" id="ARA:AT5G01310-MONOMER"/>
<dbReference type="PRO" id="PR:Q9M041"/>
<dbReference type="Proteomes" id="UP000006548">
    <property type="component" value="Chromosome 5"/>
</dbReference>
<dbReference type="ExpressionAtlas" id="Q9M041">
    <property type="expression patterns" value="baseline and differential"/>
</dbReference>
<dbReference type="GO" id="GO:0005634">
    <property type="term" value="C:nucleus"/>
    <property type="evidence" value="ECO:0000318"/>
    <property type="project" value="GO_Central"/>
</dbReference>
<dbReference type="GO" id="GO:0047627">
    <property type="term" value="F:adenylylsulfatase activity"/>
    <property type="evidence" value="ECO:0000314"/>
    <property type="project" value="TAIR"/>
</dbReference>
<dbReference type="GO" id="GO:0005524">
    <property type="term" value="F:ATP binding"/>
    <property type="evidence" value="ECO:0007669"/>
    <property type="project" value="UniProtKB-KW"/>
</dbReference>
<dbReference type="GO" id="GO:0033699">
    <property type="term" value="F:DNA 5'-adenosine monophosphate hydrolase activity"/>
    <property type="evidence" value="ECO:0000318"/>
    <property type="project" value="GO_Central"/>
</dbReference>
<dbReference type="GO" id="GO:0003725">
    <property type="term" value="F:double-stranded RNA binding"/>
    <property type="evidence" value="ECO:0000318"/>
    <property type="project" value="GO_Central"/>
</dbReference>
<dbReference type="GO" id="GO:0030983">
    <property type="term" value="F:mismatched DNA binding"/>
    <property type="evidence" value="ECO:0000318"/>
    <property type="project" value="GO_Central"/>
</dbReference>
<dbReference type="GO" id="GO:0046983">
    <property type="term" value="F:protein dimerization activity"/>
    <property type="evidence" value="ECO:0007669"/>
    <property type="project" value="InterPro"/>
</dbReference>
<dbReference type="GO" id="GO:1990165">
    <property type="term" value="F:single-strand break-containing DNA binding"/>
    <property type="evidence" value="ECO:0000318"/>
    <property type="project" value="GO_Central"/>
</dbReference>
<dbReference type="GO" id="GO:0003697">
    <property type="term" value="F:single-stranded DNA binding"/>
    <property type="evidence" value="ECO:0000318"/>
    <property type="project" value="GO_Central"/>
</dbReference>
<dbReference type="GO" id="GO:0008270">
    <property type="term" value="F:zinc ion binding"/>
    <property type="evidence" value="ECO:0007669"/>
    <property type="project" value="UniProtKB-KW"/>
</dbReference>
<dbReference type="GO" id="GO:0006260">
    <property type="term" value="P:DNA replication"/>
    <property type="evidence" value="ECO:0007669"/>
    <property type="project" value="UniProtKB-KW"/>
</dbReference>
<dbReference type="GO" id="GO:0009150">
    <property type="term" value="P:purine ribonucleotide metabolic process"/>
    <property type="evidence" value="ECO:0000314"/>
    <property type="project" value="TAIR"/>
</dbReference>
<dbReference type="GO" id="GO:0000012">
    <property type="term" value="P:single strand break repair"/>
    <property type="evidence" value="ECO:0000318"/>
    <property type="project" value="GO_Central"/>
</dbReference>
<dbReference type="GO" id="GO:0006790">
    <property type="term" value="P:sulfur compound metabolic process"/>
    <property type="evidence" value="ECO:0000314"/>
    <property type="project" value="TAIR"/>
</dbReference>
<dbReference type="CDD" id="cd11454">
    <property type="entry name" value="bHLH_AtIND_like"/>
    <property type="match status" value="1"/>
</dbReference>
<dbReference type="FunFam" id="3.30.428.10:FF:000004">
    <property type="entry name" value="aprataxin isoform X2"/>
    <property type="match status" value="1"/>
</dbReference>
<dbReference type="FunFam" id="3.40.220.10:FF:000020">
    <property type="entry name" value="Transcription factor bHLH140"/>
    <property type="match status" value="1"/>
</dbReference>
<dbReference type="FunFam" id="3.40.50.300:FF:002337">
    <property type="entry name" value="Transcription factor bHLH140"/>
    <property type="match status" value="1"/>
</dbReference>
<dbReference type="FunFam" id="4.10.280.10:FF:000089">
    <property type="entry name" value="Transcription factor LAX PANICLE"/>
    <property type="match status" value="1"/>
</dbReference>
<dbReference type="Gene3D" id="4.10.280.10">
    <property type="entry name" value="Helix-loop-helix DNA-binding domain"/>
    <property type="match status" value="1"/>
</dbReference>
<dbReference type="Gene3D" id="3.30.428.10">
    <property type="entry name" value="HIT-like"/>
    <property type="match status" value="1"/>
</dbReference>
<dbReference type="Gene3D" id="3.40.220.10">
    <property type="entry name" value="Leucine Aminopeptidase, subunit E, domain 1"/>
    <property type="match status" value="1"/>
</dbReference>
<dbReference type="Gene3D" id="3.40.50.300">
    <property type="entry name" value="P-loop containing nucleotide triphosphate hydrolases"/>
    <property type="match status" value="1"/>
</dbReference>
<dbReference type="InterPro" id="IPR011598">
    <property type="entry name" value="bHLH_dom"/>
</dbReference>
<dbReference type="InterPro" id="IPR019808">
    <property type="entry name" value="Histidine_triad_CS"/>
</dbReference>
<dbReference type="InterPro" id="IPR011146">
    <property type="entry name" value="HIT-like"/>
</dbReference>
<dbReference type="InterPro" id="IPR036265">
    <property type="entry name" value="HIT-like_sf"/>
</dbReference>
<dbReference type="InterPro" id="IPR036638">
    <property type="entry name" value="HLH_DNA-bd_sf"/>
</dbReference>
<dbReference type="InterPro" id="IPR002589">
    <property type="entry name" value="Macro_dom"/>
</dbReference>
<dbReference type="InterPro" id="IPR043472">
    <property type="entry name" value="Macro_dom-like"/>
</dbReference>
<dbReference type="InterPro" id="IPR027417">
    <property type="entry name" value="P-loop_NTPase"/>
</dbReference>
<dbReference type="InterPro" id="IPR032566">
    <property type="entry name" value="Znf-C2HE"/>
</dbReference>
<dbReference type="PANTHER" id="PTHR12486:SF4">
    <property type="entry name" value="APRATAXIN"/>
    <property type="match status" value="1"/>
</dbReference>
<dbReference type="PANTHER" id="PTHR12486">
    <property type="entry name" value="APRATAXIN-RELATED"/>
    <property type="match status" value="1"/>
</dbReference>
<dbReference type="Pfam" id="PF13671">
    <property type="entry name" value="AAA_33"/>
    <property type="match status" value="1"/>
</dbReference>
<dbReference type="Pfam" id="PF11969">
    <property type="entry name" value="DcpS_C"/>
    <property type="match status" value="1"/>
</dbReference>
<dbReference type="Pfam" id="PF00010">
    <property type="entry name" value="HLH"/>
    <property type="match status" value="1"/>
</dbReference>
<dbReference type="Pfam" id="PF01661">
    <property type="entry name" value="Macro"/>
    <property type="match status" value="1"/>
</dbReference>
<dbReference type="Pfam" id="PF16278">
    <property type="entry name" value="zf-C2HE"/>
    <property type="match status" value="1"/>
</dbReference>
<dbReference type="SMART" id="SM00506">
    <property type="entry name" value="A1pp"/>
    <property type="match status" value="1"/>
</dbReference>
<dbReference type="SMART" id="SM00353">
    <property type="entry name" value="HLH"/>
    <property type="match status" value="1"/>
</dbReference>
<dbReference type="SUPFAM" id="SSF54197">
    <property type="entry name" value="HIT-like"/>
    <property type="match status" value="1"/>
</dbReference>
<dbReference type="SUPFAM" id="SSF47459">
    <property type="entry name" value="HLH, helix-loop-helix DNA-binding domain"/>
    <property type="match status" value="1"/>
</dbReference>
<dbReference type="SUPFAM" id="SSF52949">
    <property type="entry name" value="Macro domain-like"/>
    <property type="match status" value="1"/>
</dbReference>
<dbReference type="SUPFAM" id="SSF52540">
    <property type="entry name" value="P-loop containing nucleoside triphosphate hydrolases"/>
    <property type="match status" value="1"/>
</dbReference>
<dbReference type="PROSITE" id="PS50888">
    <property type="entry name" value="BHLH"/>
    <property type="match status" value="1"/>
</dbReference>
<dbReference type="PROSITE" id="PS00892">
    <property type="entry name" value="HIT_1"/>
    <property type="match status" value="1"/>
</dbReference>
<dbReference type="PROSITE" id="PS51084">
    <property type="entry name" value="HIT_2"/>
    <property type="match status" value="1"/>
</dbReference>
<dbReference type="PROSITE" id="PS51154">
    <property type="entry name" value="MACRO"/>
    <property type="match status" value="1"/>
</dbReference>
<comment type="subunit">
    <text evidence="6">Homodimer.</text>
</comment>
<comment type="subcellular location">
    <subcellularLocation>
        <location evidence="4">Nucleus</location>
    </subcellularLocation>
</comment>
<protein>
    <recommendedName>
        <fullName>Transcription factor bHLH140</fullName>
    </recommendedName>
    <alternativeName>
        <fullName>Basic helix-loop-helix protein 140</fullName>
        <shortName>AtbHLH140</shortName>
        <shortName>bHLH 140</shortName>
    </alternativeName>
    <alternativeName>
        <fullName>Transcription factor EN 122</fullName>
    </alternativeName>
    <alternativeName>
        <fullName>bHLH transcription factor bHLH140</fullName>
    </alternativeName>
</protein>
<feature type="chain" id="PRO_0000358820" description="Transcription factor bHLH140">
    <location>
        <begin position="1"/>
        <end position="912"/>
    </location>
</feature>
<feature type="domain" description="bHLH" evidence="4">
    <location>
        <begin position="43"/>
        <end position="92"/>
    </location>
</feature>
<feature type="domain" description="Macro" evidence="3">
    <location>
        <begin position="511"/>
        <end position="690"/>
    </location>
</feature>
<feature type="domain" description="HIT" evidence="2">
    <location>
        <begin position="720"/>
        <end position="829"/>
    </location>
</feature>
<feature type="zinc finger region" description="C2H2-type">
    <location>
        <begin position="870"/>
        <end position="893"/>
    </location>
</feature>
<feature type="region of interest" description="Disordered" evidence="5">
    <location>
        <begin position="1"/>
        <end position="57"/>
    </location>
</feature>
<feature type="region of interest" description="Disordered" evidence="5">
    <location>
        <begin position="657"/>
        <end position="706"/>
    </location>
</feature>
<feature type="compositionally biased region" description="Low complexity" evidence="5">
    <location>
        <begin position="13"/>
        <end position="23"/>
    </location>
</feature>
<feature type="compositionally biased region" description="Polar residues" evidence="5">
    <location>
        <begin position="657"/>
        <end position="666"/>
    </location>
</feature>
<feature type="binding site" evidence="1">
    <location>
        <begin position="234"/>
        <end position="241"/>
    </location>
    <ligand>
        <name>ATP</name>
        <dbReference type="ChEBI" id="CHEBI:30616"/>
    </ligand>
</feature>
<keyword id="KW-0067">ATP-binding</keyword>
<keyword id="KW-0235">DNA replication</keyword>
<keyword id="KW-0238">DNA-binding</keyword>
<keyword id="KW-0479">Metal-binding</keyword>
<keyword id="KW-0547">Nucleotide-binding</keyword>
<keyword id="KW-0539">Nucleus</keyword>
<keyword id="KW-1185">Reference proteome</keyword>
<keyword id="KW-0804">Transcription</keyword>
<keyword id="KW-0805">Transcription regulation</keyword>
<keyword id="KW-0862">Zinc</keyword>
<keyword id="KW-0863">Zinc-finger</keyword>
<sequence length="912" mass="101388">MDDFNLRSENPNSSSTTSSSSSSFHRHKSETGNTKRSRSTSTLSTDPQSVAARDRRHRISDRFKILQSMVPGGAKMDTVSMLDEAISYVKFLKAQIWYHQNMLLFINDHETTSSCTYSPGAGEFGPKLFGYDDDYAPIMDTYSQGVPLTVADSKYTPWFGSVDDEQEHVTYFKYRRATRHALRGHCNCIIGETEEFADQREKMEVQIEESGKNQTSPESIEADKAKQIVVLLIGPPGSGKSTFCDTAMRSSHRPWSRICQDIVNNGKAGTKAQCLKMATDSLREGKSVFIDRCNLDREQRSEFIKLGGPEFEVHAVVLELPAQVCISRSVKRTGHEGNLQGGRAAAVVNKMLQSKELPKVNEGFSRIMFCYSDADVDNAVNMYNKLGPMDTLPSGCFGEKKLDTKSQPGIMKFFKKVSALPASSSNEATNTTRKADEMTANVRVSPVKLGSADIVPTLAFPSISTADFQFDLEKASDIIVEKAEEFLSKLGTARLVLVDLSRGSKILSLVKAKASQKNIDSAKFFTFVGDITKLRSEGGLHCNVIANATNWRLKPGGGGVNAAIFKAAGPDLETATRVRANTLLPGKAVVVPLPSTCPLHNAEGITHVIHVLGPNMNPNRPDNLNNDYTKGCKTLREAYTSLFEGFLSVVQDQSKLPKRSSQTAVSDSGEDIKEDSERNKKYKGSQDKAVTNNLESESLEDTRGSGKKMSKGWNTWALALHSIAMHPERHENVVLEYLDNIVVINDQYPKARKHVLVLARQESLDGLEDVRKENLQLLQEMHNVGLKWVDRFQNEDASLIFRLGYHSVPSMRQLHLHVISQDFNSDSLKNKKHWNSFTTSFFRDSVDVLEEVNSQGKANVASEDLLKGELRCNRCRSAHPNIPKLKSHVRSCHSQFPDHLLQNNRLVARAET</sequence>
<reference key="1">
    <citation type="journal article" date="2000" name="Nature">
        <title>Sequence and analysis of chromosome 5 of the plant Arabidopsis thaliana.</title>
        <authorList>
            <person name="Tabata S."/>
            <person name="Kaneko T."/>
            <person name="Nakamura Y."/>
            <person name="Kotani H."/>
            <person name="Kato T."/>
            <person name="Asamizu E."/>
            <person name="Miyajima N."/>
            <person name="Sasamoto S."/>
            <person name="Kimura T."/>
            <person name="Hosouchi T."/>
            <person name="Kawashima K."/>
            <person name="Kohara M."/>
            <person name="Matsumoto M."/>
            <person name="Matsuno A."/>
            <person name="Muraki A."/>
            <person name="Nakayama S."/>
            <person name="Nakazaki N."/>
            <person name="Naruo K."/>
            <person name="Okumura S."/>
            <person name="Shinpo S."/>
            <person name="Takeuchi C."/>
            <person name="Wada T."/>
            <person name="Watanabe A."/>
            <person name="Yamada M."/>
            <person name="Yasuda M."/>
            <person name="Sato S."/>
            <person name="de la Bastide M."/>
            <person name="Huang E."/>
            <person name="Spiegel L."/>
            <person name="Gnoj L."/>
            <person name="O'Shaughnessy A."/>
            <person name="Preston R."/>
            <person name="Habermann K."/>
            <person name="Murray J."/>
            <person name="Johnson D."/>
            <person name="Rohlfing T."/>
            <person name="Nelson J."/>
            <person name="Stoneking T."/>
            <person name="Pepin K."/>
            <person name="Spieth J."/>
            <person name="Sekhon M."/>
            <person name="Armstrong J."/>
            <person name="Becker M."/>
            <person name="Belter E."/>
            <person name="Cordum H."/>
            <person name="Cordes M."/>
            <person name="Courtney L."/>
            <person name="Courtney W."/>
            <person name="Dante M."/>
            <person name="Du H."/>
            <person name="Edwards J."/>
            <person name="Fryman J."/>
            <person name="Haakensen B."/>
            <person name="Lamar E."/>
            <person name="Latreille P."/>
            <person name="Leonard S."/>
            <person name="Meyer R."/>
            <person name="Mulvaney E."/>
            <person name="Ozersky P."/>
            <person name="Riley A."/>
            <person name="Strowmatt C."/>
            <person name="Wagner-McPherson C."/>
            <person name="Wollam A."/>
            <person name="Yoakum M."/>
            <person name="Bell M."/>
            <person name="Dedhia N."/>
            <person name="Parnell L."/>
            <person name="Shah R."/>
            <person name="Rodriguez M."/>
            <person name="Hoon See L."/>
            <person name="Vil D."/>
            <person name="Baker J."/>
            <person name="Kirchoff K."/>
            <person name="Toth K."/>
            <person name="King L."/>
            <person name="Bahret A."/>
            <person name="Miller B."/>
            <person name="Marra M.A."/>
            <person name="Martienssen R."/>
            <person name="McCombie W.R."/>
            <person name="Wilson R.K."/>
            <person name="Murphy G."/>
            <person name="Bancroft I."/>
            <person name="Volckaert G."/>
            <person name="Wambutt R."/>
            <person name="Duesterhoeft A."/>
            <person name="Stiekema W."/>
            <person name="Pohl T."/>
            <person name="Entian K.-D."/>
            <person name="Terryn N."/>
            <person name="Hartley N."/>
            <person name="Bent E."/>
            <person name="Johnson S."/>
            <person name="Langham S.-A."/>
            <person name="McCullagh B."/>
            <person name="Robben J."/>
            <person name="Grymonprez B."/>
            <person name="Zimmermann W."/>
            <person name="Ramsperger U."/>
            <person name="Wedler H."/>
            <person name="Balke K."/>
            <person name="Wedler E."/>
            <person name="Peters S."/>
            <person name="van Staveren M."/>
            <person name="Dirkse W."/>
            <person name="Mooijman P."/>
            <person name="Klein Lankhorst R."/>
            <person name="Weitzenegger T."/>
            <person name="Bothe G."/>
            <person name="Rose M."/>
            <person name="Hauf J."/>
            <person name="Berneiser S."/>
            <person name="Hempel S."/>
            <person name="Feldpausch M."/>
            <person name="Lamberth S."/>
            <person name="Villarroel R."/>
            <person name="Gielen J."/>
            <person name="Ardiles W."/>
            <person name="Bents O."/>
            <person name="Lemcke K."/>
            <person name="Kolesov G."/>
            <person name="Mayer K.F.X."/>
            <person name="Rudd S."/>
            <person name="Schoof H."/>
            <person name="Schueller C."/>
            <person name="Zaccaria P."/>
            <person name="Mewes H.-W."/>
            <person name="Bevan M."/>
            <person name="Fransz P.F."/>
        </authorList>
    </citation>
    <scope>NUCLEOTIDE SEQUENCE [LARGE SCALE GENOMIC DNA]</scope>
    <source>
        <strain>cv. Columbia</strain>
    </source>
</reference>
<reference key="2">
    <citation type="journal article" date="2017" name="Plant J.">
        <title>Araport11: a complete reannotation of the Arabidopsis thaliana reference genome.</title>
        <authorList>
            <person name="Cheng C.Y."/>
            <person name="Krishnakumar V."/>
            <person name="Chan A.P."/>
            <person name="Thibaud-Nissen F."/>
            <person name="Schobel S."/>
            <person name="Town C.D."/>
        </authorList>
    </citation>
    <scope>GENOME REANNOTATION</scope>
    <source>
        <strain>cv. Columbia</strain>
    </source>
</reference>
<reference key="3">
    <citation type="journal article" date="2003" name="Plant Cell">
        <title>The Arabidopsis basic/helix-loop-helix transcription factor family.</title>
        <authorList>
            <person name="Toledo-Ortiz G."/>
            <person name="Huq E."/>
            <person name="Quail P.H."/>
        </authorList>
    </citation>
    <scope>GENE FAMILY</scope>
    <scope>NOMENCLATURE</scope>
</reference>
<reference key="4">
    <citation type="journal article" date="2003" name="Plant Cell">
        <title>Update on the basic helix-loop-helix transcription factor gene family in Arabidopsis thaliana.</title>
        <authorList>
            <person name="Bailey P.C."/>
            <person name="Martin C."/>
            <person name="Toledo-Ortiz G."/>
            <person name="Quail P.H."/>
            <person name="Huq E."/>
            <person name="Heim M.A."/>
            <person name="Jakoby M."/>
            <person name="Werber M."/>
            <person name="Weisshaar B."/>
        </authorList>
    </citation>
    <scope>GENE FAMILY</scope>
    <scope>NOMENCLATURE</scope>
</reference>
<accession>Q9M041</accession>
<proteinExistence type="inferred from homology"/>
<gene>
    <name type="primary">BHLH140</name>
    <name type="synonym">EN122</name>
    <name type="ordered locus">At5g01310</name>
    <name type="ORF">T10O8.20</name>
</gene>
<evidence type="ECO:0000255" key="1"/>
<evidence type="ECO:0000255" key="2">
    <source>
        <dbReference type="PROSITE-ProRule" id="PRU00464"/>
    </source>
</evidence>
<evidence type="ECO:0000255" key="3">
    <source>
        <dbReference type="PROSITE-ProRule" id="PRU00490"/>
    </source>
</evidence>
<evidence type="ECO:0000255" key="4">
    <source>
        <dbReference type="PROSITE-ProRule" id="PRU00981"/>
    </source>
</evidence>
<evidence type="ECO:0000256" key="5">
    <source>
        <dbReference type="SAM" id="MobiDB-lite"/>
    </source>
</evidence>
<evidence type="ECO:0000305" key="6"/>
<organism>
    <name type="scientific">Arabidopsis thaliana</name>
    <name type="common">Mouse-ear cress</name>
    <dbReference type="NCBI Taxonomy" id="3702"/>
    <lineage>
        <taxon>Eukaryota</taxon>
        <taxon>Viridiplantae</taxon>
        <taxon>Streptophyta</taxon>
        <taxon>Embryophyta</taxon>
        <taxon>Tracheophyta</taxon>
        <taxon>Spermatophyta</taxon>
        <taxon>Magnoliopsida</taxon>
        <taxon>eudicotyledons</taxon>
        <taxon>Gunneridae</taxon>
        <taxon>Pentapetalae</taxon>
        <taxon>rosids</taxon>
        <taxon>malvids</taxon>
        <taxon>Brassicales</taxon>
        <taxon>Brassicaceae</taxon>
        <taxon>Camelineae</taxon>
        <taxon>Arabidopsis</taxon>
    </lineage>
</organism>
<name>BH140_ARATH</name>